<protein>
    <recommendedName>
        <fullName evidence="1">Ribonuclease HII</fullName>
        <shortName evidence="1">RNase HII</shortName>
        <ecNumber evidence="1">3.1.26.4</ecNumber>
    </recommendedName>
</protein>
<comment type="function">
    <text evidence="1">Endonuclease that specifically degrades the RNA of RNA-DNA hybrids.</text>
</comment>
<comment type="catalytic activity">
    <reaction evidence="1">
        <text>Endonucleolytic cleavage to 5'-phosphomonoester.</text>
        <dbReference type="EC" id="3.1.26.4"/>
    </reaction>
</comment>
<comment type="cofactor">
    <cofactor evidence="1">
        <name>Mn(2+)</name>
        <dbReference type="ChEBI" id="CHEBI:29035"/>
    </cofactor>
    <cofactor evidence="1">
        <name>Mg(2+)</name>
        <dbReference type="ChEBI" id="CHEBI:18420"/>
    </cofactor>
    <text evidence="1">Manganese or magnesium. Binds 1 divalent metal ion per monomer in the absence of substrate. May bind a second metal ion after substrate binding.</text>
</comment>
<comment type="subcellular location">
    <subcellularLocation>
        <location evidence="1">Cytoplasm</location>
    </subcellularLocation>
</comment>
<comment type="similarity">
    <text evidence="1">Belongs to the RNase HII family.</text>
</comment>
<feature type="chain" id="PRO_1000031220" description="Ribonuclease HII">
    <location>
        <begin position="1"/>
        <end position="212"/>
    </location>
</feature>
<feature type="domain" description="RNase H type-2" evidence="2">
    <location>
        <begin position="24"/>
        <end position="212"/>
    </location>
</feature>
<feature type="binding site" evidence="1">
    <location>
        <position position="30"/>
    </location>
    <ligand>
        <name>a divalent metal cation</name>
        <dbReference type="ChEBI" id="CHEBI:60240"/>
    </ligand>
</feature>
<feature type="binding site" evidence="1">
    <location>
        <position position="31"/>
    </location>
    <ligand>
        <name>a divalent metal cation</name>
        <dbReference type="ChEBI" id="CHEBI:60240"/>
    </ligand>
</feature>
<feature type="binding site" evidence="1">
    <location>
        <position position="122"/>
    </location>
    <ligand>
        <name>a divalent metal cation</name>
        <dbReference type="ChEBI" id="CHEBI:60240"/>
    </ligand>
</feature>
<dbReference type="EC" id="3.1.26.4" evidence="1"/>
<dbReference type="EMBL" id="CP000789">
    <property type="protein sequence ID" value="ABU72172.1"/>
    <property type="molecule type" value="Genomic_DNA"/>
</dbReference>
<dbReference type="RefSeq" id="WP_012128688.1">
    <property type="nucleotide sequence ID" value="NC_022269.1"/>
</dbReference>
<dbReference type="SMR" id="A7MY01"/>
<dbReference type="GeneID" id="67376536"/>
<dbReference type="KEGG" id="vha:VIBHAR_03223"/>
<dbReference type="PATRIC" id="fig|338187.25.peg.2967"/>
<dbReference type="Proteomes" id="UP000008152">
    <property type="component" value="Chromosome I"/>
</dbReference>
<dbReference type="GO" id="GO:0005737">
    <property type="term" value="C:cytoplasm"/>
    <property type="evidence" value="ECO:0007669"/>
    <property type="project" value="UniProtKB-SubCell"/>
</dbReference>
<dbReference type="GO" id="GO:0032299">
    <property type="term" value="C:ribonuclease H2 complex"/>
    <property type="evidence" value="ECO:0007669"/>
    <property type="project" value="TreeGrafter"/>
</dbReference>
<dbReference type="GO" id="GO:0030145">
    <property type="term" value="F:manganese ion binding"/>
    <property type="evidence" value="ECO:0007669"/>
    <property type="project" value="UniProtKB-UniRule"/>
</dbReference>
<dbReference type="GO" id="GO:0003723">
    <property type="term" value="F:RNA binding"/>
    <property type="evidence" value="ECO:0007669"/>
    <property type="project" value="InterPro"/>
</dbReference>
<dbReference type="GO" id="GO:0004523">
    <property type="term" value="F:RNA-DNA hybrid ribonuclease activity"/>
    <property type="evidence" value="ECO:0007669"/>
    <property type="project" value="UniProtKB-UniRule"/>
</dbReference>
<dbReference type="GO" id="GO:0043137">
    <property type="term" value="P:DNA replication, removal of RNA primer"/>
    <property type="evidence" value="ECO:0007669"/>
    <property type="project" value="TreeGrafter"/>
</dbReference>
<dbReference type="GO" id="GO:0006298">
    <property type="term" value="P:mismatch repair"/>
    <property type="evidence" value="ECO:0007669"/>
    <property type="project" value="TreeGrafter"/>
</dbReference>
<dbReference type="CDD" id="cd07182">
    <property type="entry name" value="RNase_HII_bacteria_HII_like"/>
    <property type="match status" value="1"/>
</dbReference>
<dbReference type="FunFam" id="3.30.420.10:FF:000006">
    <property type="entry name" value="Ribonuclease HII"/>
    <property type="match status" value="1"/>
</dbReference>
<dbReference type="Gene3D" id="3.30.420.10">
    <property type="entry name" value="Ribonuclease H-like superfamily/Ribonuclease H"/>
    <property type="match status" value="1"/>
</dbReference>
<dbReference type="HAMAP" id="MF_00052_B">
    <property type="entry name" value="RNase_HII_B"/>
    <property type="match status" value="1"/>
</dbReference>
<dbReference type="InterPro" id="IPR022898">
    <property type="entry name" value="RNase_HII"/>
</dbReference>
<dbReference type="InterPro" id="IPR001352">
    <property type="entry name" value="RNase_HII/HIII"/>
</dbReference>
<dbReference type="InterPro" id="IPR024567">
    <property type="entry name" value="RNase_HII/HIII_dom"/>
</dbReference>
<dbReference type="InterPro" id="IPR012337">
    <property type="entry name" value="RNaseH-like_sf"/>
</dbReference>
<dbReference type="InterPro" id="IPR036397">
    <property type="entry name" value="RNaseH_sf"/>
</dbReference>
<dbReference type="NCBIfam" id="NF000594">
    <property type="entry name" value="PRK00015.1-1"/>
    <property type="match status" value="1"/>
</dbReference>
<dbReference type="NCBIfam" id="NF000595">
    <property type="entry name" value="PRK00015.1-3"/>
    <property type="match status" value="1"/>
</dbReference>
<dbReference type="NCBIfam" id="NF000596">
    <property type="entry name" value="PRK00015.1-4"/>
    <property type="match status" value="1"/>
</dbReference>
<dbReference type="PANTHER" id="PTHR10954">
    <property type="entry name" value="RIBONUCLEASE H2 SUBUNIT A"/>
    <property type="match status" value="1"/>
</dbReference>
<dbReference type="PANTHER" id="PTHR10954:SF18">
    <property type="entry name" value="RIBONUCLEASE HII"/>
    <property type="match status" value="1"/>
</dbReference>
<dbReference type="Pfam" id="PF01351">
    <property type="entry name" value="RNase_HII"/>
    <property type="match status" value="1"/>
</dbReference>
<dbReference type="SUPFAM" id="SSF53098">
    <property type="entry name" value="Ribonuclease H-like"/>
    <property type="match status" value="1"/>
</dbReference>
<dbReference type="PROSITE" id="PS51975">
    <property type="entry name" value="RNASE_H_2"/>
    <property type="match status" value="1"/>
</dbReference>
<sequence length="212" mass="23242">MAVKPKTTKAKVELPPFEYPQGYQLVAGVDEVGRGPLVGDVVTAAVILDPNNPIEGLNDSKKLSEKKRLALLPEIKEKALAWAVGRCSPEEIDELNILQATMVAMQRAIAGLKVQPDLALIDGNRCPELPMDSQAVVKGDLRVAEISAASIIAKVVRDQEMEELDKQYPQFGFAKHKGYPTKAHFEAIEQHGVISEHRKSFKPVKKALGIEE</sequence>
<name>RNH2_VIBC1</name>
<reference key="1">
    <citation type="submission" date="2007-08" db="EMBL/GenBank/DDBJ databases">
        <authorList>
            <consortium name="The Vibrio harveyi Genome Sequencing Project"/>
            <person name="Bassler B."/>
            <person name="Clifton S.W."/>
            <person name="Fulton L."/>
            <person name="Delehaunty K."/>
            <person name="Fronick C."/>
            <person name="Harrison M."/>
            <person name="Markivic C."/>
            <person name="Fulton R."/>
            <person name="Tin-Wollam A.-M."/>
            <person name="Shah N."/>
            <person name="Pepin K."/>
            <person name="Nash W."/>
            <person name="Thiruvilangam P."/>
            <person name="Bhonagiri V."/>
            <person name="Waters C."/>
            <person name="Tu K.C."/>
            <person name="Irgon J."/>
            <person name="Wilson R.K."/>
        </authorList>
    </citation>
    <scope>NUCLEOTIDE SEQUENCE [LARGE SCALE GENOMIC DNA]</scope>
    <source>
        <strain>ATCC BAA-1116 / BB120</strain>
    </source>
</reference>
<accession>A7MY01</accession>
<keyword id="KW-0963">Cytoplasm</keyword>
<keyword id="KW-0255">Endonuclease</keyword>
<keyword id="KW-0378">Hydrolase</keyword>
<keyword id="KW-0464">Manganese</keyword>
<keyword id="KW-0479">Metal-binding</keyword>
<keyword id="KW-0540">Nuclease</keyword>
<gene>
    <name evidence="1" type="primary">rnhB</name>
    <name type="ordered locus">VIBHAR_03223</name>
</gene>
<evidence type="ECO:0000255" key="1">
    <source>
        <dbReference type="HAMAP-Rule" id="MF_00052"/>
    </source>
</evidence>
<evidence type="ECO:0000255" key="2">
    <source>
        <dbReference type="PROSITE-ProRule" id="PRU01319"/>
    </source>
</evidence>
<proteinExistence type="inferred from homology"/>
<organism>
    <name type="scientific">Vibrio campbellii (strain ATCC BAA-1116)</name>
    <dbReference type="NCBI Taxonomy" id="2902295"/>
    <lineage>
        <taxon>Bacteria</taxon>
        <taxon>Pseudomonadati</taxon>
        <taxon>Pseudomonadota</taxon>
        <taxon>Gammaproteobacteria</taxon>
        <taxon>Vibrionales</taxon>
        <taxon>Vibrionaceae</taxon>
        <taxon>Vibrio</taxon>
    </lineage>
</organism>